<comment type="function">
    <text evidence="1">Part of the twin-arginine translocation (Tat) system that transports large folded proteins containing a characteristic twin-arginine motif in their signal peptide across membranes. Together with TatC, TatB is part of a receptor directly interacting with Tat signal peptides. TatB may form an oligomeric binding site that transiently accommodates folded Tat precursor proteins before their translocation.</text>
</comment>
<comment type="subunit">
    <text evidence="1">The Tat system comprises two distinct complexes: a TatABC complex, containing multiple copies of TatA, TatB and TatC subunits, and a separate TatA complex, containing only TatA subunits. Substrates initially bind to the TatABC complex, which probably triggers association of the separate TatA complex to form the active translocon.</text>
</comment>
<comment type="subcellular location">
    <subcellularLocation>
        <location evidence="1">Cell membrane</location>
        <topology evidence="1">Single-pass membrane protein</topology>
    </subcellularLocation>
</comment>
<comment type="similarity">
    <text evidence="1">Belongs to the TatB family.</text>
</comment>
<organism>
    <name type="scientific">Mycolicibacterium paratuberculosis (strain ATCC BAA-968 / K-10)</name>
    <name type="common">Mycobacterium paratuberculosis</name>
    <dbReference type="NCBI Taxonomy" id="262316"/>
    <lineage>
        <taxon>Bacteria</taxon>
        <taxon>Bacillati</taxon>
        <taxon>Actinomycetota</taxon>
        <taxon>Actinomycetes</taxon>
        <taxon>Mycobacteriales</taxon>
        <taxon>Mycobacteriaceae</taxon>
        <taxon>Mycobacterium</taxon>
        <taxon>Mycobacterium avium complex (MAC)</taxon>
    </lineage>
</organism>
<reference key="1">
    <citation type="journal article" date="2005" name="Proc. Natl. Acad. Sci. U.S.A.">
        <title>The complete genome sequence of Mycobacterium avium subspecies paratuberculosis.</title>
        <authorList>
            <person name="Li L."/>
            <person name="Bannantine J.P."/>
            <person name="Zhang Q."/>
            <person name="Amonsin A."/>
            <person name="May B.J."/>
            <person name="Alt D."/>
            <person name="Banerji N."/>
            <person name="Kanjilal S."/>
            <person name="Kapur V."/>
        </authorList>
    </citation>
    <scope>NUCLEOTIDE SEQUENCE [LARGE SCALE GENOMIC DNA]</scope>
    <source>
        <strain>ATCC BAA-968 / K-10</strain>
    </source>
</reference>
<sequence>MLGSLSWEHMLVLVVVGLVVLGPERLPGAIRWTSNALRQARDYLSGVTTQLREDLGPEFDDLRVPLSELQKLRGMTPRAALTKHLLDGDDSFLTGAFDRPVNGAAAQPPPAPAPPPEPHRSGQTPFDADAT</sequence>
<protein>
    <recommendedName>
        <fullName evidence="1">Sec-independent protein translocase protein TatB</fullName>
    </recommendedName>
</protein>
<dbReference type="EMBL" id="AE016958">
    <property type="protein sequence ID" value="AAS04871.1"/>
    <property type="molecule type" value="Genomic_DNA"/>
</dbReference>
<dbReference type="RefSeq" id="WP_003875525.1">
    <property type="nucleotide sequence ID" value="NZ_CP106873.1"/>
</dbReference>
<dbReference type="SMR" id="Q73WV6"/>
<dbReference type="STRING" id="262316.MAP_2554c"/>
<dbReference type="KEGG" id="mpa:MAP_2554c"/>
<dbReference type="PATRIC" id="fig|262316.17.peg.2711"/>
<dbReference type="eggNOG" id="COG1826">
    <property type="taxonomic scope" value="Bacteria"/>
</dbReference>
<dbReference type="HOGENOM" id="CLU_086034_2_0_11"/>
<dbReference type="Proteomes" id="UP000000580">
    <property type="component" value="Chromosome"/>
</dbReference>
<dbReference type="GO" id="GO:0033281">
    <property type="term" value="C:TAT protein transport complex"/>
    <property type="evidence" value="ECO:0007669"/>
    <property type="project" value="UniProtKB-UniRule"/>
</dbReference>
<dbReference type="GO" id="GO:0008320">
    <property type="term" value="F:protein transmembrane transporter activity"/>
    <property type="evidence" value="ECO:0007669"/>
    <property type="project" value="UniProtKB-UniRule"/>
</dbReference>
<dbReference type="GO" id="GO:0043953">
    <property type="term" value="P:protein transport by the Tat complex"/>
    <property type="evidence" value="ECO:0007669"/>
    <property type="project" value="UniProtKB-UniRule"/>
</dbReference>
<dbReference type="Gene3D" id="1.20.5.3310">
    <property type="match status" value="1"/>
</dbReference>
<dbReference type="HAMAP" id="MF_00237">
    <property type="entry name" value="TatB"/>
    <property type="match status" value="1"/>
</dbReference>
<dbReference type="InterPro" id="IPR003369">
    <property type="entry name" value="TatA/B/E"/>
</dbReference>
<dbReference type="InterPro" id="IPR018448">
    <property type="entry name" value="TatB"/>
</dbReference>
<dbReference type="NCBIfam" id="TIGR01410">
    <property type="entry name" value="tatB"/>
    <property type="match status" value="1"/>
</dbReference>
<dbReference type="Pfam" id="PF02416">
    <property type="entry name" value="TatA_B_E"/>
    <property type="match status" value="1"/>
</dbReference>
<dbReference type="PRINTS" id="PR01506">
    <property type="entry name" value="TATBPROTEIN"/>
</dbReference>
<keyword id="KW-1003">Cell membrane</keyword>
<keyword id="KW-0472">Membrane</keyword>
<keyword id="KW-0653">Protein transport</keyword>
<keyword id="KW-1185">Reference proteome</keyword>
<keyword id="KW-0811">Translocation</keyword>
<keyword id="KW-0812">Transmembrane</keyword>
<keyword id="KW-1133">Transmembrane helix</keyword>
<keyword id="KW-0813">Transport</keyword>
<evidence type="ECO:0000255" key="1">
    <source>
        <dbReference type="HAMAP-Rule" id="MF_00237"/>
    </source>
</evidence>
<evidence type="ECO:0000256" key="2">
    <source>
        <dbReference type="SAM" id="MobiDB-lite"/>
    </source>
</evidence>
<name>TATB_MYCPA</name>
<gene>
    <name evidence="1" type="primary">tatB</name>
    <name type="ordered locus">MAP_2554c</name>
</gene>
<proteinExistence type="inferred from homology"/>
<accession>Q73WV6</accession>
<feature type="chain" id="PRO_0000301187" description="Sec-independent protein translocase protein TatB">
    <location>
        <begin position="1"/>
        <end position="131"/>
    </location>
</feature>
<feature type="transmembrane region" description="Helical" evidence="1">
    <location>
        <begin position="2"/>
        <end position="22"/>
    </location>
</feature>
<feature type="region of interest" description="Disordered" evidence="2">
    <location>
        <begin position="96"/>
        <end position="131"/>
    </location>
</feature>
<feature type="compositionally biased region" description="Pro residues" evidence="2">
    <location>
        <begin position="107"/>
        <end position="116"/>
    </location>
</feature>